<accession>F2XFA2</accession>
<gene>
    <name evidence="5 6" type="primary">TPS-Cin</name>
</gene>
<sequence length="612" mass="70237">MALVCGAPLASRSCLNKSLISSTHELKPLRRTILPTLRWKSATPSINMCLTTSNSVDAVQRRIANHHSNLWDDDFIQSLSTPYEAPSYRERAERLIGEVKEMFESMGPNNDLLQRLSMVESVERLGIDRHFKNEIKSALDYVYSHWNEKGIGCGRDSVVSDLNSTALALRTLRLHGYPVSSDVLEHFKDQKGRFACSSIKTEGEIRSLLNLFRASLVAFPNEKVMEEAEIFSTTYLKEAVQKIPVSSLSRQIEYNMEYGWHTNLPRLEARNYMGDMIHVMPYMNAEKLLELAKLEFNIFHSLQERELKHLSRWWKDSGFSQLTFVRHRHVEYYTLASCIDIDPKHSAFRLGFAKMCHLITVLDDIYDTFGTMDELKLFTAAIKRWDPSATEWLPEYMKGVYMVVYETVNEMAGEAKKSQGRDTINYARQAWEAYIDSYMKEAEWISSGCLPTFEEYYENGKVSFGYQISVLQPILTLDVPLPHHILQEIIFPSRFNGLASGILRLKGDTRCYQADRARGEEASCISCYMNDNPGATEEDALNHIHAMVNELMKEFNWELLKPDNNVPVSSKKHAFDITRAVHHGYKYRDGYSVANNEIKNLVITTVLEPVPL</sequence>
<reference key="1">
    <citation type="journal article" date="2011" name="BMC Plant Biol.">
        <title>Transcriptome mining, functional characterization, and phylogeny of a large terpene synthase gene family in spruce (Picea spp.).</title>
        <authorList>
            <person name="Keeling C.I."/>
            <person name="Weisshaar S."/>
            <person name="Ralph S.G."/>
            <person name="Jancsik S."/>
            <person name="Hamberger B."/>
            <person name="Dullat H.K."/>
            <person name="Bohlmann J."/>
        </authorList>
    </citation>
    <scope>NUCLEOTIDE SEQUENCE [MRNA]</scope>
    <scope>CATALYTIC ACTIVITY</scope>
    <scope>FUNCTION</scope>
    <scope>PATHWAY</scope>
    <scope>GENE FAMILY</scope>
    <source>
        <strain>cv. PG29</strain>
    </source>
</reference>
<reference key="2">
    <citation type="journal article" date="2015" name="Plant J.">
        <title>Improved white spruce (Picea glauca) genome assemblies and annotation of large gene families of conifer terpenoid and phenolic defense metabolism.</title>
        <authorList>
            <person name="Warren R.L."/>
            <person name="Keeling C.I."/>
            <person name="Yuen M.M.S."/>
            <person name="Raymond A."/>
            <person name="Taylor G.A."/>
            <person name="Vandervalk B.P."/>
            <person name="Mohamadi H."/>
            <person name="Paulino D."/>
            <person name="Chiu R."/>
            <person name="Jackman S.D."/>
            <person name="Robertson G."/>
            <person name="Yang C."/>
            <person name="Hoffmann M."/>
            <person name="Weigel D."/>
            <person name="Nelson D.R."/>
            <person name="Ritland C."/>
            <person name="Isabel N."/>
            <person name="Jaquish B."/>
            <person name="Yanchuk A."/>
            <person name="Bousquet J."/>
            <person name="Jones S.J.M."/>
            <person name="MacKay J."/>
            <person name="Birol I."/>
            <person name="Bohlmann J."/>
        </authorList>
    </citation>
    <scope>NUCLEOTIDE SEQUENCE [MRNA]</scope>
</reference>
<evidence type="ECO:0000250" key="1">
    <source>
        <dbReference type="UniProtKB" id="A0A1C9J6A7"/>
    </source>
</evidence>
<evidence type="ECO:0000250" key="2">
    <source>
        <dbReference type="UniProtKB" id="Q40577"/>
    </source>
</evidence>
<evidence type="ECO:0000255" key="3"/>
<evidence type="ECO:0000269" key="4">
    <source>
    </source>
</evidence>
<evidence type="ECO:0000303" key="5">
    <source>
    </source>
</evidence>
<evidence type="ECO:0000303" key="6">
    <source>
    </source>
</evidence>
<evidence type="ECO:0000305" key="7"/>
<dbReference type="EC" id="4.2.3.108" evidence="4"/>
<dbReference type="EMBL" id="HQ426160">
    <property type="protein sequence ID" value="ADZ45498.1"/>
    <property type="molecule type" value="mRNA"/>
</dbReference>
<dbReference type="EMBL" id="GCZO01133025">
    <property type="protein sequence ID" value="JAI17753.1"/>
    <property type="molecule type" value="Transcribed_RNA"/>
</dbReference>
<dbReference type="SMR" id="F2XFA2"/>
<dbReference type="UniPathway" id="UPA00924"/>
<dbReference type="GO" id="GO:0009507">
    <property type="term" value="C:chloroplast"/>
    <property type="evidence" value="ECO:0007669"/>
    <property type="project" value="UniProtKB-SubCell"/>
</dbReference>
<dbReference type="GO" id="GO:0102313">
    <property type="term" value="F:1,8-cineole synthase activity"/>
    <property type="evidence" value="ECO:0000314"/>
    <property type="project" value="UniProtKB"/>
</dbReference>
<dbReference type="GO" id="GO:0016829">
    <property type="term" value="F:lyase activity"/>
    <property type="evidence" value="ECO:0000314"/>
    <property type="project" value="UniProtKB"/>
</dbReference>
<dbReference type="GO" id="GO:0000287">
    <property type="term" value="F:magnesium ion binding"/>
    <property type="evidence" value="ECO:0007669"/>
    <property type="project" value="InterPro"/>
</dbReference>
<dbReference type="GO" id="GO:0010333">
    <property type="term" value="F:terpene synthase activity"/>
    <property type="evidence" value="ECO:0007669"/>
    <property type="project" value="InterPro"/>
</dbReference>
<dbReference type="GO" id="GO:0016102">
    <property type="term" value="P:diterpenoid biosynthetic process"/>
    <property type="evidence" value="ECO:0007669"/>
    <property type="project" value="InterPro"/>
</dbReference>
<dbReference type="GO" id="GO:0010597">
    <property type="term" value="P:green leaf volatile biosynthetic process"/>
    <property type="evidence" value="ECO:0000314"/>
    <property type="project" value="UniProtKB"/>
</dbReference>
<dbReference type="GO" id="GO:0016099">
    <property type="term" value="P:monoterpenoid biosynthetic process"/>
    <property type="evidence" value="ECO:0000314"/>
    <property type="project" value="UniProtKB"/>
</dbReference>
<dbReference type="CDD" id="cd00684">
    <property type="entry name" value="Terpene_cyclase_plant_C1"/>
    <property type="match status" value="1"/>
</dbReference>
<dbReference type="FunFam" id="1.50.10.130:FF:000002">
    <property type="entry name" value="Ent-copalyl diphosphate synthase, chloroplastic"/>
    <property type="match status" value="1"/>
</dbReference>
<dbReference type="FunFam" id="1.10.600.10:FF:000005">
    <property type="entry name" value="Ent-kaur-16-ene synthase, chloroplastic"/>
    <property type="match status" value="1"/>
</dbReference>
<dbReference type="Gene3D" id="1.10.600.10">
    <property type="entry name" value="Farnesyl Diphosphate Synthase"/>
    <property type="match status" value="1"/>
</dbReference>
<dbReference type="Gene3D" id="1.50.10.130">
    <property type="entry name" value="Terpene synthase, N-terminal domain"/>
    <property type="match status" value="1"/>
</dbReference>
<dbReference type="InterPro" id="IPR008949">
    <property type="entry name" value="Isoprenoid_synthase_dom_sf"/>
</dbReference>
<dbReference type="InterPro" id="IPR034741">
    <property type="entry name" value="Terpene_cyclase-like_1_C"/>
</dbReference>
<dbReference type="InterPro" id="IPR044814">
    <property type="entry name" value="Terpene_cyclase_plant_C1"/>
</dbReference>
<dbReference type="InterPro" id="IPR001906">
    <property type="entry name" value="Terpene_synth_N"/>
</dbReference>
<dbReference type="InterPro" id="IPR036965">
    <property type="entry name" value="Terpene_synth_N_sf"/>
</dbReference>
<dbReference type="InterPro" id="IPR050148">
    <property type="entry name" value="Terpene_synthase-like"/>
</dbReference>
<dbReference type="InterPro" id="IPR005630">
    <property type="entry name" value="Terpene_synthase_metal-bd"/>
</dbReference>
<dbReference type="InterPro" id="IPR008930">
    <property type="entry name" value="Terpenoid_cyclase/PrenylTrfase"/>
</dbReference>
<dbReference type="PANTHER" id="PTHR31225">
    <property type="entry name" value="OS04G0344100 PROTEIN-RELATED"/>
    <property type="match status" value="1"/>
</dbReference>
<dbReference type="Pfam" id="PF01397">
    <property type="entry name" value="Terpene_synth"/>
    <property type="match status" value="1"/>
</dbReference>
<dbReference type="Pfam" id="PF03936">
    <property type="entry name" value="Terpene_synth_C"/>
    <property type="match status" value="1"/>
</dbReference>
<dbReference type="SFLD" id="SFLDS00005">
    <property type="entry name" value="Isoprenoid_Synthase_Type_I"/>
    <property type="match status" value="1"/>
</dbReference>
<dbReference type="SFLD" id="SFLDG01019">
    <property type="entry name" value="Terpene_Cyclase_Like_1_C_Termi"/>
    <property type="match status" value="1"/>
</dbReference>
<dbReference type="SFLD" id="SFLDG01014">
    <property type="entry name" value="Terpene_Cyclase_Like_1_N-term"/>
    <property type="match status" value="1"/>
</dbReference>
<dbReference type="SUPFAM" id="SSF48239">
    <property type="entry name" value="Terpenoid cyclases/Protein prenyltransferases"/>
    <property type="match status" value="1"/>
</dbReference>
<dbReference type="SUPFAM" id="SSF48576">
    <property type="entry name" value="Terpenoid synthases"/>
    <property type="match status" value="1"/>
</dbReference>
<organism>
    <name type="scientific">Picea glauca</name>
    <name type="common">White spruce</name>
    <name type="synonym">Pinus glauca</name>
    <dbReference type="NCBI Taxonomy" id="3330"/>
    <lineage>
        <taxon>Eukaryota</taxon>
        <taxon>Viridiplantae</taxon>
        <taxon>Streptophyta</taxon>
        <taxon>Embryophyta</taxon>
        <taxon>Tracheophyta</taxon>
        <taxon>Spermatophyta</taxon>
        <taxon>Pinopsida</taxon>
        <taxon>Pinidae</taxon>
        <taxon>Conifers I</taxon>
        <taxon>Pinales</taxon>
        <taxon>Pinaceae</taxon>
        <taxon>Picea</taxon>
    </lineage>
</organism>
<keyword id="KW-0150">Chloroplast</keyword>
<keyword id="KW-0456">Lyase</keyword>
<keyword id="KW-0460">Magnesium</keyword>
<keyword id="KW-0479">Metal-binding</keyword>
<keyword id="KW-0934">Plastid</keyword>
<keyword id="KW-0809">Transit peptide</keyword>
<feature type="transit peptide" description="Chloroplast" evidence="3">
    <location>
        <begin position="1"/>
        <end position="52"/>
    </location>
</feature>
<feature type="chain" id="PRO_0000454402" description="1,8-cineole synthase, chloroplastic">
    <location>
        <begin position="53"/>
        <end position="612"/>
    </location>
</feature>
<feature type="short sequence motif" description="DDXXD motif" evidence="1">
    <location>
        <begin position="363"/>
        <end position="367"/>
    </location>
</feature>
<feature type="binding site" evidence="2">
    <location>
        <position position="363"/>
    </location>
    <ligand>
        <name>Mg(2+)</name>
        <dbReference type="ChEBI" id="CHEBI:18420"/>
        <label>1</label>
    </ligand>
</feature>
<feature type="binding site" evidence="2">
    <location>
        <position position="363"/>
    </location>
    <ligand>
        <name>Mg(2+)</name>
        <dbReference type="ChEBI" id="CHEBI:18420"/>
        <label>2</label>
    </ligand>
</feature>
<feature type="binding site" evidence="2">
    <location>
        <position position="367"/>
    </location>
    <ligand>
        <name>Mg(2+)</name>
        <dbReference type="ChEBI" id="CHEBI:18420"/>
        <label>1</label>
    </ligand>
</feature>
<feature type="binding site" evidence="2">
    <location>
        <position position="367"/>
    </location>
    <ligand>
        <name>Mg(2+)</name>
        <dbReference type="ChEBI" id="CHEBI:18420"/>
        <label>2</label>
    </ligand>
</feature>
<feature type="binding site" evidence="2">
    <location>
        <position position="515"/>
    </location>
    <ligand>
        <name>Mg(2+)</name>
        <dbReference type="ChEBI" id="CHEBI:18420"/>
        <label>3</label>
    </ligand>
</feature>
<protein>
    <recommendedName>
        <fullName evidence="5 6">1,8-cineole synthase, chloroplastic</fullName>
        <ecNumber evidence="4">4.2.3.108</ecNumber>
    </recommendedName>
    <alternativeName>
        <fullName evidence="5 6">Terpene synthase TPS-Cin</fullName>
        <shortName evidence="5 6">PgTPS-Cin</shortName>
    </alternativeName>
</protein>
<name>CINES_PICGL</name>
<comment type="function">
    <text evidence="4">Terpene synthase (TPS) involved in the biosynthesis of monoterpene natural products included in conifer oleoresin secretions and volatile emissions; these compounds contribute to biotic and abiotic stress defense against herbivores and pathogens (PubMed:21385377). Catalyzes the conversion of (2E)-geranyl diphosphate (GPP) to 1,8-cineole (PubMed:21385377).</text>
</comment>
<comment type="catalytic activity">
    <reaction evidence="4">
        <text>(2E)-geranyl diphosphate + H2O = 1,8-cineole + diphosphate</text>
        <dbReference type="Rhea" id="RHEA:32543"/>
        <dbReference type="ChEBI" id="CHEBI:15377"/>
        <dbReference type="ChEBI" id="CHEBI:27961"/>
        <dbReference type="ChEBI" id="CHEBI:33019"/>
        <dbReference type="ChEBI" id="CHEBI:58057"/>
        <dbReference type="EC" id="4.2.3.108"/>
    </reaction>
</comment>
<comment type="cofactor">
    <cofactor evidence="1">
        <name>Mg(2+)</name>
        <dbReference type="ChEBI" id="CHEBI:18420"/>
    </cofactor>
    <cofactor evidence="1">
        <name>Mn(2+)</name>
        <dbReference type="ChEBI" id="CHEBI:29035"/>
    </cofactor>
    <text evidence="1">Binds 3 Mg(2+) or Mn(2+) ions per subunit.</text>
</comment>
<comment type="pathway">
    <text evidence="4">Terpene metabolism; oleoresin biosynthesis.</text>
</comment>
<comment type="subcellular location">
    <subcellularLocation>
        <location evidence="3">Plastid</location>
        <location evidence="3">Chloroplast</location>
    </subcellularLocation>
</comment>
<comment type="domain">
    <text evidence="1">The Asp-Asp-Xaa-Xaa-Asp/Glu (DDXXD/E) motif is important for the catalytic activity, presumably through binding to Mg(2+).</text>
</comment>
<comment type="similarity">
    <text evidence="7">Belongs to the terpene synthase family. Tpsd subfamily.</text>
</comment>
<proteinExistence type="evidence at protein level"/>